<organismHost>
    <name type="scientific">Aves</name>
    <dbReference type="NCBI Taxonomy" id="8782"/>
</organismHost>
<comment type="function">
    <text evidence="1">Binds to sialic acid-containing receptors on the cell surface, bringing about the attachment of the virus particle to the cell. This attachment induces virion internalization either through clathrin-dependent endocytosis or through clathrin- and caveolin-independent pathway. Plays a major role in the determination of host range restriction and virulence. Class I viral fusion protein. Responsible for penetration of the virus into the cell cytoplasm by mediating the fusion of the membrane of the endocytosed virus particle with the endosomal membrane. Low pH in endosomes induces an irreversible conformational change in HA2, releasing the fusion hydrophobic peptide. Several trimers are required to form a competent fusion pore.</text>
</comment>
<comment type="subunit">
    <text evidence="1">Homotrimer of disulfide-linked HA1-HA2.</text>
</comment>
<comment type="subcellular location">
    <subcellularLocation>
        <location evidence="1">Virion membrane</location>
        <topology evidence="1">Single-pass type I membrane protein</topology>
    </subcellularLocation>
    <subcellularLocation>
        <location evidence="1">Host apical cell membrane</location>
        <topology evidence="1">Single-pass type I membrane protein</topology>
    </subcellularLocation>
    <text evidence="1">Targeted to the apical plasma membrane in epithelial polarized cells through a signal present in the transmembrane domain. Associated with glycosphingolipid- and cholesterol-enriched detergent-resistant lipid rafts.</text>
</comment>
<comment type="PTM">
    <text evidence="1">Palmitoylated.</text>
</comment>
<comment type="PTM">
    <text evidence="1">In natural infection, inactive HA is matured into HA1 and HA2 outside the cell by one or more trypsin-like, arginine-specific endoprotease secreted by the bronchial epithelial cells. One identified protease that may be involved in this process is secreted in lungs by club cells.</text>
</comment>
<comment type="miscellaneous">
    <text>Major glycoprotein, comprises over 80% of the envelope proteins present in virus particle.</text>
</comment>
<comment type="miscellaneous">
    <text>The extent of infection into host organism is determined by HA. Influenza viruses bud from the apical surface of polarized epithelial cells (e.g. bronchial epithelial cells) into lumen of lungs and are therefore usually pneumotropic. The reason is that HA is cleaved by tryptase clara which is restricted to lungs. However, HAs of H5 and H7 pantropic avian viruses subtypes can be cleaved by furin and subtilisin-type enzymes, allowing the virus to grow in other organs than lungs.</text>
</comment>
<comment type="miscellaneous">
    <text>The influenza A genome consist of 8 RNA segments. Genetic variation of hemagglutinin and/or neuraminidase genes results in the emergence of new influenza strains. The mechanism of variation can be the result of point mutations or the result of genetic reassortment between segments of two different strains.</text>
</comment>
<comment type="similarity">
    <text evidence="1">Belongs to the influenza viruses hemagglutinin family.</text>
</comment>
<reference key="1">
    <citation type="journal article" date="1991" name="J. Gen. Virol.">
        <title>Molecular evidence for a role of domestic ducks in the introduction of avian H3 influenza viruses to pigs in southern China, where the A/Hong Kong/68 (H3N2) strain emerged.</title>
        <authorList>
            <person name="Yasuda J."/>
            <person name="Shortridge K.F."/>
            <person name="Shimizu Y."/>
            <person name="Kida H."/>
        </authorList>
    </citation>
    <scope>NUCLEOTIDE SEQUENCE [GENOMIC RNA]</scope>
</reference>
<evidence type="ECO:0000255" key="1">
    <source>
        <dbReference type="HAMAP-Rule" id="MF_04072"/>
    </source>
</evidence>
<feature type="chain" id="PRO_0000038957" description="Hemagglutinin HA1 chain">
    <location>
        <begin position="1"/>
        <end position="328"/>
    </location>
</feature>
<feature type="chain" id="PRO_0000038958" description="Hemagglutinin HA2 chain" evidence="1">
    <location>
        <begin position="330"/>
        <end position="550"/>
    </location>
</feature>
<feature type="topological domain" description="Extracellular" evidence="1">
    <location>
        <begin position="1"/>
        <end position="514"/>
    </location>
</feature>
<feature type="transmembrane region" description="Helical" evidence="1">
    <location>
        <begin position="515"/>
        <end position="535"/>
    </location>
</feature>
<feature type="topological domain" description="Cytoplasmic" evidence="1">
    <location>
        <begin position="536"/>
        <end position="550"/>
    </location>
</feature>
<feature type="site" description="Cleavage; by host" evidence="1">
    <location>
        <begin position="329"/>
        <end position="330"/>
    </location>
</feature>
<feature type="lipid moiety-binding region" description="S-palmitoyl cysteine; by host" evidence="1">
    <location>
        <position position="539"/>
    </location>
</feature>
<feature type="lipid moiety-binding region" description="S-palmitoyl cysteine; by host" evidence="1">
    <location>
        <position position="546"/>
    </location>
</feature>
<feature type="lipid moiety-binding region" description="S-palmitoyl cysteine; by host" evidence="1">
    <location>
        <position position="549"/>
    </location>
</feature>
<feature type="glycosylation site" description="N-linked (GlcNAc...) asparagine; by host" evidence="1">
    <location>
        <position position="8"/>
    </location>
</feature>
<feature type="glycosylation site" description="N-linked (GlcNAc...) asparagine; by host" evidence="1">
    <location>
        <position position="22"/>
    </location>
</feature>
<feature type="glycosylation site" description="N-linked (GlcNAc...) asparagine; by host" evidence="1">
    <location>
        <position position="38"/>
    </location>
</feature>
<feature type="glycosylation site" description="N-linked (GlcNAc...) asparagine; by host" evidence="1">
    <location>
        <position position="165"/>
    </location>
</feature>
<feature type="glycosylation site" description="N-linked (GlcNAc...) asparagine; by host" evidence="1">
    <location>
        <position position="285"/>
    </location>
</feature>
<feature type="glycosylation site" description="N-linked (GlcNAc...) asparagine; by host" evidence="1">
    <location>
        <position position="483"/>
    </location>
</feature>
<feature type="disulfide bond" description="Interchain (between HA1 and HA2 chains)" evidence="1">
    <location>
        <begin position="14"/>
        <end position="466"/>
    </location>
</feature>
<feature type="disulfide bond" evidence="1">
    <location>
        <begin position="52"/>
        <end position="277"/>
    </location>
</feature>
<feature type="disulfide bond" evidence="1">
    <location>
        <begin position="64"/>
        <end position="76"/>
    </location>
</feature>
<feature type="disulfide bond" evidence="1">
    <location>
        <begin position="97"/>
        <end position="139"/>
    </location>
</feature>
<feature type="disulfide bond" evidence="1">
    <location>
        <begin position="281"/>
        <end position="305"/>
    </location>
</feature>
<feature type="disulfide bond" evidence="1">
    <location>
        <begin position="473"/>
        <end position="477"/>
    </location>
</feature>
<feature type="non-terminal residue">
    <location>
        <position position="1"/>
    </location>
</feature>
<name>HEMA_I76AC</name>
<gene>
    <name evidence="1" type="primary">HA</name>
</gene>
<sequence>QDLPGTDNSTATLCLGHHAVPNGTIVKTITDDQIEVTNATELVQTSSTGKICNNPHRILDGRDCTLIDALLGDPHCDVFQDETWDLFVERSNAFSNCYPYDVPDYASLRSLVASSGTLEFITEGFTWTGVTQNGGSNACKRGPANGFFSRLNWLTKSGSTYPVLNVTMPNNDNFDKLYIWGVHHPSTNQEQTNLYVQASGRVTVSTRRSQQTIIPNIGSRPWVRGQSGRISIYWTIVKPGDVLVINSNGNLIAPRGYFKMRTGKSSIMRSDALIDTCVSECITPNGSIPNDKPFQNVNKITYGACPKYVKQNTLKLAIGMRNVPEKQTRGLFGAIAGFIENGWEGMIDGWYGFRHQNSEGTGQAADLKSTQAAIDQINGKLNRVIEKTNGKFHQIEKEFSEVEGRIQDLEKYVEDTKIDLWSYNADVLVALENQHTIDLTDSEMNKLFEKTRRQLRENAEDMGNGCFKIYHKCDNTCIESIRNGTYDHDVYRDEALNNRFQIKGVELKSGYKDWILWISFAISCFLLCVVLLGFIMWACQRGNIRCNICI</sequence>
<dbReference type="EMBL" id="D00930">
    <property type="protein sequence ID" value="BAA00770.1"/>
    <property type="molecule type" value="Genomic_RNA"/>
</dbReference>
<dbReference type="SMR" id="P43260"/>
<dbReference type="GlyCosmos" id="P43260">
    <property type="glycosylation" value="6 sites, No reported glycans"/>
</dbReference>
<dbReference type="GO" id="GO:0020002">
    <property type="term" value="C:host cell plasma membrane"/>
    <property type="evidence" value="ECO:0007669"/>
    <property type="project" value="UniProtKB-SubCell"/>
</dbReference>
<dbReference type="GO" id="GO:0016020">
    <property type="term" value="C:membrane"/>
    <property type="evidence" value="ECO:0007669"/>
    <property type="project" value="UniProtKB-KW"/>
</dbReference>
<dbReference type="GO" id="GO:0019031">
    <property type="term" value="C:viral envelope"/>
    <property type="evidence" value="ECO:0007669"/>
    <property type="project" value="UniProtKB-KW"/>
</dbReference>
<dbReference type="GO" id="GO:0055036">
    <property type="term" value="C:virion membrane"/>
    <property type="evidence" value="ECO:0007669"/>
    <property type="project" value="UniProtKB-SubCell"/>
</dbReference>
<dbReference type="GO" id="GO:0046789">
    <property type="term" value="F:host cell surface receptor binding"/>
    <property type="evidence" value="ECO:0007669"/>
    <property type="project" value="InterPro"/>
</dbReference>
<dbReference type="GO" id="GO:0075512">
    <property type="term" value="P:clathrin-dependent endocytosis of virus by host cell"/>
    <property type="evidence" value="ECO:0007669"/>
    <property type="project" value="UniProtKB-KW"/>
</dbReference>
<dbReference type="GO" id="GO:0039654">
    <property type="term" value="P:fusion of virus membrane with host endosome membrane"/>
    <property type="evidence" value="ECO:0007669"/>
    <property type="project" value="UniProtKB-KW"/>
</dbReference>
<dbReference type="GO" id="GO:0019064">
    <property type="term" value="P:fusion of virus membrane with host plasma membrane"/>
    <property type="evidence" value="ECO:0007669"/>
    <property type="project" value="InterPro"/>
</dbReference>
<dbReference type="GO" id="GO:0019062">
    <property type="term" value="P:virion attachment to host cell"/>
    <property type="evidence" value="ECO:0007669"/>
    <property type="project" value="UniProtKB-KW"/>
</dbReference>
<dbReference type="FunFam" id="3.90.20.10:FF:000001">
    <property type="entry name" value="Hemagglutinin"/>
    <property type="match status" value="1"/>
</dbReference>
<dbReference type="FunFam" id="3.90.209.20:FF:000001">
    <property type="entry name" value="Hemagglutinin"/>
    <property type="match status" value="1"/>
</dbReference>
<dbReference type="Gene3D" id="3.90.20.10">
    <property type="match status" value="1"/>
</dbReference>
<dbReference type="Gene3D" id="3.90.209.20">
    <property type="match status" value="1"/>
</dbReference>
<dbReference type="HAMAP" id="MF_04072">
    <property type="entry name" value="INFV_HEMA"/>
    <property type="match status" value="1"/>
</dbReference>
<dbReference type="InterPro" id="IPR008980">
    <property type="entry name" value="Capsid_hemagglutn"/>
</dbReference>
<dbReference type="InterPro" id="IPR013828">
    <property type="entry name" value="Hemagglutn_HA1_a/b_dom_sf"/>
</dbReference>
<dbReference type="InterPro" id="IPR000149">
    <property type="entry name" value="Hemagglutn_influenz_A"/>
</dbReference>
<dbReference type="InterPro" id="IPR001364">
    <property type="entry name" value="Hemagglutn_influenz_A/B"/>
</dbReference>
<dbReference type="Pfam" id="PF00509">
    <property type="entry name" value="Hemagglutinin"/>
    <property type="match status" value="1"/>
</dbReference>
<dbReference type="PRINTS" id="PR00330">
    <property type="entry name" value="HEMAGGLUTN1"/>
</dbReference>
<dbReference type="PRINTS" id="PR00329">
    <property type="entry name" value="HEMAGGLUTN12"/>
</dbReference>
<dbReference type="SUPFAM" id="SSF58064">
    <property type="entry name" value="Influenza hemagglutinin (stalk)"/>
    <property type="match status" value="1"/>
</dbReference>
<dbReference type="SUPFAM" id="SSF49818">
    <property type="entry name" value="Viral protein domain"/>
    <property type="match status" value="1"/>
</dbReference>
<accession>P43260</accession>
<organism>
    <name type="scientific">Influenza A virus (strain A/Goose/Hong Kong/10/1976 H3)</name>
    <dbReference type="NCBI Taxonomy" id="45414"/>
    <lineage>
        <taxon>Viruses</taxon>
        <taxon>Riboviria</taxon>
        <taxon>Orthornavirae</taxon>
        <taxon>Negarnaviricota</taxon>
        <taxon>Polyploviricotina</taxon>
        <taxon>Insthoviricetes</taxon>
        <taxon>Articulavirales</taxon>
        <taxon>Orthomyxoviridae</taxon>
        <taxon>Alphainfluenzavirus</taxon>
        <taxon>Alphainfluenzavirus influenzae</taxon>
        <taxon>Influenza A virus</taxon>
    </lineage>
</organism>
<proteinExistence type="inferred from homology"/>
<protein>
    <recommendedName>
        <fullName evidence="1">Hemagglutinin</fullName>
    </recommendedName>
    <component>
        <recommendedName>
            <fullName evidence="1">Hemagglutinin HA1 chain</fullName>
        </recommendedName>
    </component>
    <component>
        <recommendedName>
            <fullName evidence="1">Hemagglutinin HA2 chain</fullName>
        </recommendedName>
    </component>
</protein>
<keyword id="KW-1167">Clathrin- and caveolin-independent endocytosis of virus by host</keyword>
<keyword id="KW-1165">Clathrin-mediated endocytosis of virus by host</keyword>
<keyword id="KW-1015">Disulfide bond</keyword>
<keyword id="KW-1170">Fusion of virus membrane with host endosomal membrane</keyword>
<keyword id="KW-1168">Fusion of virus membrane with host membrane</keyword>
<keyword id="KW-0325">Glycoprotein</keyword>
<keyword id="KW-0348">Hemagglutinin</keyword>
<keyword id="KW-1032">Host cell membrane</keyword>
<keyword id="KW-1043">Host membrane</keyword>
<keyword id="KW-0945">Host-virus interaction</keyword>
<keyword id="KW-0449">Lipoprotein</keyword>
<keyword id="KW-0472">Membrane</keyword>
<keyword id="KW-0564">Palmitate</keyword>
<keyword id="KW-0812">Transmembrane</keyword>
<keyword id="KW-1133">Transmembrane helix</keyword>
<keyword id="KW-1161">Viral attachment to host cell</keyword>
<keyword id="KW-0261">Viral envelope protein</keyword>
<keyword id="KW-1162">Viral penetration into host cytoplasm</keyword>
<keyword id="KW-0946">Virion</keyword>
<keyword id="KW-1164">Virus endocytosis by host</keyword>
<keyword id="KW-1160">Virus entry into host cell</keyword>